<keyword id="KW-0175">Coiled coil</keyword>
<keyword id="KW-0403">Intermediate filament</keyword>
<keyword id="KW-0416">Keratin</keyword>
<keyword id="KW-1267">Proteomics identification</keyword>
<keyword id="KW-1185">Reference proteome</keyword>
<name>KR87P_HUMAN</name>
<reference key="1">
    <citation type="journal article" date="2004" name="Nat. Genet.">
        <title>Complete sequencing and characterization of 21,243 full-length human cDNAs.</title>
        <authorList>
            <person name="Ota T."/>
            <person name="Suzuki Y."/>
            <person name="Nishikawa T."/>
            <person name="Otsuki T."/>
            <person name="Sugiyama T."/>
            <person name="Irie R."/>
            <person name="Wakamatsu A."/>
            <person name="Hayashi K."/>
            <person name="Sato H."/>
            <person name="Nagai K."/>
            <person name="Kimura K."/>
            <person name="Makita H."/>
            <person name="Sekine M."/>
            <person name="Obayashi M."/>
            <person name="Nishi T."/>
            <person name="Shibahara T."/>
            <person name="Tanaka T."/>
            <person name="Ishii S."/>
            <person name="Yamamoto J."/>
            <person name="Saito K."/>
            <person name="Kawai Y."/>
            <person name="Isono Y."/>
            <person name="Nakamura Y."/>
            <person name="Nagahari K."/>
            <person name="Murakami K."/>
            <person name="Yasuda T."/>
            <person name="Iwayanagi T."/>
            <person name="Wagatsuma M."/>
            <person name="Shiratori A."/>
            <person name="Sudo H."/>
            <person name="Hosoiri T."/>
            <person name="Kaku Y."/>
            <person name="Kodaira H."/>
            <person name="Kondo H."/>
            <person name="Sugawara M."/>
            <person name="Takahashi M."/>
            <person name="Kanda K."/>
            <person name="Yokoi T."/>
            <person name="Furuya T."/>
            <person name="Kikkawa E."/>
            <person name="Omura Y."/>
            <person name="Abe K."/>
            <person name="Kamihara K."/>
            <person name="Katsuta N."/>
            <person name="Sato K."/>
            <person name="Tanikawa M."/>
            <person name="Yamazaki M."/>
            <person name="Ninomiya K."/>
            <person name="Ishibashi T."/>
            <person name="Yamashita H."/>
            <person name="Murakawa K."/>
            <person name="Fujimori K."/>
            <person name="Tanai H."/>
            <person name="Kimata M."/>
            <person name="Watanabe M."/>
            <person name="Hiraoka S."/>
            <person name="Chiba Y."/>
            <person name="Ishida S."/>
            <person name="Ono Y."/>
            <person name="Takiguchi S."/>
            <person name="Watanabe S."/>
            <person name="Yosida M."/>
            <person name="Hotuta T."/>
            <person name="Kusano J."/>
            <person name="Kanehori K."/>
            <person name="Takahashi-Fujii A."/>
            <person name="Hara H."/>
            <person name="Tanase T.-O."/>
            <person name="Nomura Y."/>
            <person name="Togiya S."/>
            <person name="Komai F."/>
            <person name="Hara R."/>
            <person name="Takeuchi K."/>
            <person name="Arita M."/>
            <person name="Imose N."/>
            <person name="Musashino K."/>
            <person name="Yuuki H."/>
            <person name="Oshima A."/>
            <person name="Sasaki N."/>
            <person name="Aotsuka S."/>
            <person name="Yoshikawa Y."/>
            <person name="Matsunawa H."/>
            <person name="Ichihara T."/>
            <person name="Shiohata N."/>
            <person name="Sano S."/>
            <person name="Moriya S."/>
            <person name="Momiyama H."/>
            <person name="Satoh N."/>
            <person name="Takami S."/>
            <person name="Terashima Y."/>
            <person name="Suzuki O."/>
            <person name="Nakagawa S."/>
            <person name="Senoh A."/>
            <person name="Mizoguchi H."/>
            <person name="Goto Y."/>
            <person name="Shimizu F."/>
            <person name="Wakebe H."/>
            <person name="Hishigaki H."/>
            <person name="Watanabe T."/>
            <person name="Sugiyama A."/>
            <person name="Takemoto M."/>
            <person name="Kawakami B."/>
            <person name="Yamazaki M."/>
            <person name="Watanabe K."/>
            <person name="Kumagai A."/>
            <person name="Itakura S."/>
            <person name="Fukuzumi Y."/>
            <person name="Fujimori Y."/>
            <person name="Komiyama M."/>
            <person name="Tashiro H."/>
            <person name="Tanigami A."/>
            <person name="Fujiwara T."/>
            <person name="Ono T."/>
            <person name="Yamada K."/>
            <person name="Fujii Y."/>
            <person name="Ozaki K."/>
            <person name="Hirao M."/>
            <person name="Ohmori Y."/>
            <person name="Kawabata A."/>
            <person name="Hikiji T."/>
            <person name="Kobatake N."/>
            <person name="Inagaki H."/>
            <person name="Ikema Y."/>
            <person name="Okamoto S."/>
            <person name="Okitani R."/>
            <person name="Kawakami T."/>
            <person name="Noguchi S."/>
            <person name="Itoh T."/>
            <person name="Shigeta K."/>
            <person name="Senba T."/>
            <person name="Matsumura K."/>
            <person name="Nakajima Y."/>
            <person name="Mizuno T."/>
            <person name="Morinaga M."/>
            <person name="Sasaki M."/>
            <person name="Togashi T."/>
            <person name="Oyama M."/>
            <person name="Hata H."/>
            <person name="Watanabe M."/>
            <person name="Komatsu T."/>
            <person name="Mizushima-Sugano J."/>
            <person name="Satoh T."/>
            <person name="Shirai Y."/>
            <person name="Takahashi Y."/>
            <person name="Nakagawa K."/>
            <person name="Okumura K."/>
            <person name="Nagase T."/>
            <person name="Nomura N."/>
            <person name="Kikuchi H."/>
            <person name="Masuho Y."/>
            <person name="Yamashita R."/>
            <person name="Nakai K."/>
            <person name="Yada T."/>
            <person name="Nakamura Y."/>
            <person name="Ohara O."/>
            <person name="Isogai T."/>
            <person name="Sugano S."/>
        </authorList>
    </citation>
    <scope>NUCLEOTIDE SEQUENCE [LARGE SCALE MRNA]</scope>
    <source>
        <tissue>Placenta</tissue>
    </source>
</reference>
<reference key="2">
    <citation type="journal article" date="2006" name="Nature">
        <title>The finished DNA sequence of human chromosome 12.</title>
        <authorList>
            <person name="Scherer S.E."/>
            <person name="Muzny D.M."/>
            <person name="Buhay C.J."/>
            <person name="Chen R."/>
            <person name="Cree A."/>
            <person name="Ding Y."/>
            <person name="Dugan-Rocha S."/>
            <person name="Gill R."/>
            <person name="Gunaratne P."/>
            <person name="Harris R.A."/>
            <person name="Hawes A.C."/>
            <person name="Hernandez J."/>
            <person name="Hodgson A.V."/>
            <person name="Hume J."/>
            <person name="Jackson A."/>
            <person name="Khan Z.M."/>
            <person name="Kovar-Smith C."/>
            <person name="Lewis L.R."/>
            <person name="Lozado R.J."/>
            <person name="Metzker M.L."/>
            <person name="Milosavljevic A."/>
            <person name="Miner G.R."/>
            <person name="Montgomery K.T."/>
            <person name="Morgan M.B."/>
            <person name="Nazareth L.V."/>
            <person name="Scott G."/>
            <person name="Sodergren E."/>
            <person name="Song X.-Z."/>
            <person name="Steffen D."/>
            <person name="Lovering R.C."/>
            <person name="Wheeler D.A."/>
            <person name="Worley K.C."/>
            <person name="Yuan Y."/>
            <person name="Zhang Z."/>
            <person name="Adams C.Q."/>
            <person name="Ansari-Lari M.A."/>
            <person name="Ayele M."/>
            <person name="Brown M.J."/>
            <person name="Chen G."/>
            <person name="Chen Z."/>
            <person name="Clerc-Blankenburg K.P."/>
            <person name="Davis C."/>
            <person name="Delgado O."/>
            <person name="Dinh H.H."/>
            <person name="Draper H."/>
            <person name="Gonzalez-Garay M.L."/>
            <person name="Havlak P."/>
            <person name="Jackson L.R."/>
            <person name="Jacob L.S."/>
            <person name="Kelly S.H."/>
            <person name="Li L."/>
            <person name="Li Z."/>
            <person name="Liu J."/>
            <person name="Liu W."/>
            <person name="Lu J."/>
            <person name="Maheshwari M."/>
            <person name="Nguyen B.-V."/>
            <person name="Okwuonu G.O."/>
            <person name="Pasternak S."/>
            <person name="Perez L.M."/>
            <person name="Plopper F.J.H."/>
            <person name="Santibanez J."/>
            <person name="Shen H."/>
            <person name="Tabor P.E."/>
            <person name="Verduzco D."/>
            <person name="Waldron L."/>
            <person name="Wang Q."/>
            <person name="Williams G.A."/>
            <person name="Zhang J."/>
            <person name="Zhou J."/>
            <person name="Allen C.C."/>
            <person name="Amin A.G."/>
            <person name="Anyalebechi V."/>
            <person name="Bailey M."/>
            <person name="Barbaria J.A."/>
            <person name="Bimage K.E."/>
            <person name="Bryant N.P."/>
            <person name="Burch P.E."/>
            <person name="Burkett C.E."/>
            <person name="Burrell K.L."/>
            <person name="Calderon E."/>
            <person name="Cardenas V."/>
            <person name="Carter K."/>
            <person name="Casias K."/>
            <person name="Cavazos I."/>
            <person name="Cavazos S.R."/>
            <person name="Ceasar H."/>
            <person name="Chacko J."/>
            <person name="Chan S.N."/>
            <person name="Chavez D."/>
            <person name="Christopoulos C."/>
            <person name="Chu J."/>
            <person name="Cockrell R."/>
            <person name="Cox C.D."/>
            <person name="Dang M."/>
            <person name="Dathorne S.R."/>
            <person name="David R."/>
            <person name="Davis C.M."/>
            <person name="Davy-Carroll L."/>
            <person name="Deshazo D.R."/>
            <person name="Donlin J.E."/>
            <person name="D'Souza L."/>
            <person name="Eaves K.A."/>
            <person name="Egan A."/>
            <person name="Emery-Cohen A.J."/>
            <person name="Escotto M."/>
            <person name="Flagg N."/>
            <person name="Forbes L.D."/>
            <person name="Gabisi A.M."/>
            <person name="Garza M."/>
            <person name="Hamilton C."/>
            <person name="Henderson N."/>
            <person name="Hernandez O."/>
            <person name="Hines S."/>
            <person name="Hogues M.E."/>
            <person name="Huang M."/>
            <person name="Idlebird D.G."/>
            <person name="Johnson R."/>
            <person name="Jolivet A."/>
            <person name="Jones S."/>
            <person name="Kagan R."/>
            <person name="King L.M."/>
            <person name="Leal B."/>
            <person name="Lebow H."/>
            <person name="Lee S."/>
            <person name="LeVan J.M."/>
            <person name="Lewis L.C."/>
            <person name="London P."/>
            <person name="Lorensuhewa L.M."/>
            <person name="Loulseged H."/>
            <person name="Lovett D.A."/>
            <person name="Lucier A."/>
            <person name="Lucier R.L."/>
            <person name="Ma J."/>
            <person name="Madu R.C."/>
            <person name="Mapua P."/>
            <person name="Martindale A.D."/>
            <person name="Martinez E."/>
            <person name="Massey E."/>
            <person name="Mawhiney S."/>
            <person name="Meador M.G."/>
            <person name="Mendez S."/>
            <person name="Mercado C."/>
            <person name="Mercado I.C."/>
            <person name="Merritt C.E."/>
            <person name="Miner Z.L."/>
            <person name="Minja E."/>
            <person name="Mitchell T."/>
            <person name="Mohabbat F."/>
            <person name="Mohabbat K."/>
            <person name="Montgomery B."/>
            <person name="Moore N."/>
            <person name="Morris S."/>
            <person name="Munidasa M."/>
            <person name="Ngo R.N."/>
            <person name="Nguyen N.B."/>
            <person name="Nickerson E."/>
            <person name="Nwaokelemeh O.O."/>
            <person name="Nwokenkwo S."/>
            <person name="Obregon M."/>
            <person name="Oguh M."/>
            <person name="Oragunye N."/>
            <person name="Oviedo R.J."/>
            <person name="Parish B.J."/>
            <person name="Parker D.N."/>
            <person name="Parrish J."/>
            <person name="Parks K.L."/>
            <person name="Paul H.A."/>
            <person name="Payton B.A."/>
            <person name="Perez A."/>
            <person name="Perrin W."/>
            <person name="Pickens A."/>
            <person name="Primus E.L."/>
            <person name="Pu L.-L."/>
            <person name="Puazo M."/>
            <person name="Quiles M.M."/>
            <person name="Quiroz J.B."/>
            <person name="Rabata D."/>
            <person name="Reeves K."/>
            <person name="Ruiz S.J."/>
            <person name="Shao H."/>
            <person name="Sisson I."/>
            <person name="Sonaike T."/>
            <person name="Sorelle R.P."/>
            <person name="Sutton A.E."/>
            <person name="Svatek A.F."/>
            <person name="Svetz L.A."/>
            <person name="Tamerisa K.S."/>
            <person name="Taylor T.R."/>
            <person name="Teague B."/>
            <person name="Thomas N."/>
            <person name="Thorn R.D."/>
            <person name="Trejos Z.Y."/>
            <person name="Trevino B.K."/>
            <person name="Ukegbu O.N."/>
            <person name="Urban J.B."/>
            <person name="Vasquez L.I."/>
            <person name="Vera V.A."/>
            <person name="Villasana D.M."/>
            <person name="Wang L."/>
            <person name="Ward-Moore S."/>
            <person name="Warren J.T."/>
            <person name="Wei X."/>
            <person name="White F."/>
            <person name="Williamson A.L."/>
            <person name="Wleczyk R."/>
            <person name="Wooden H.S."/>
            <person name="Wooden S.H."/>
            <person name="Yen J."/>
            <person name="Yoon L."/>
            <person name="Yoon V."/>
            <person name="Zorrilla S.E."/>
            <person name="Nelson D."/>
            <person name="Kucherlapati R."/>
            <person name="Weinstock G."/>
            <person name="Gibbs R.A."/>
        </authorList>
    </citation>
    <scope>NUCLEOTIDE SEQUENCE [LARGE SCALE GENOMIC DNA]</scope>
</reference>
<sequence length="255" mass="29117">MEANSGRLASELNHVQEVLEGYKKKYEEEVALRATAENEFVALKKDVDCAYLRKSDLEANVEALTQEIDFLRRLYEEEIRVLQSHISDTSVVVKMDNSRDLNMHCVITEIKAQYDDIATRSRAEAESWYRSKCEEMKATVIRHGETLRRTKEEINELNRMIQRLTAEVENAKCQNSKLEAAVAQSEQQGEAALSDARCKLAELEGALQKAKQDMACLIREYQEVMNSKLAWTLRSPPTGACWRARSRGCVRALVL</sequence>
<dbReference type="EMBL" id="AK300121">
    <property type="protein sequence ID" value="BAG61913.1"/>
    <property type="molecule type" value="mRNA"/>
</dbReference>
<dbReference type="EMBL" id="AC021066">
    <property type="status" value="NOT_ANNOTATED_CDS"/>
    <property type="molecule type" value="Genomic_DNA"/>
</dbReference>
<dbReference type="SMR" id="A6NCN2"/>
<dbReference type="FunCoup" id="A6NCN2">
    <property type="interactions" value="3"/>
</dbReference>
<dbReference type="IntAct" id="A6NCN2">
    <property type="interactions" value="1"/>
</dbReference>
<dbReference type="ChEMBL" id="CHEMBL4523107"/>
<dbReference type="iPTMnet" id="A6NCN2"/>
<dbReference type="PhosphoSitePlus" id="A6NCN2"/>
<dbReference type="SwissPalm" id="A6NCN2"/>
<dbReference type="BioMuta" id="HGNC:30198"/>
<dbReference type="jPOST" id="A6NCN2"/>
<dbReference type="MassIVE" id="A6NCN2"/>
<dbReference type="AGR" id="HGNC:30198"/>
<dbReference type="GeneCards" id="KRT87P"/>
<dbReference type="HGNC" id="HGNC:30198">
    <property type="gene designation" value="KRT87P"/>
</dbReference>
<dbReference type="neXtProt" id="NX_A6NCN2"/>
<dbReference type="InParanoid" id="A6NCN2"/>
<dbReference type="PAN-GO" id="A6NCN2">
    <property type="GO annotations" value="1 GO annotation based on evolutionary models"/>
</dbReference>
<dbReference type="ChiTaRS" id="KRT87P">
    <property type="organism name" value="human"/>
</dbReference>
<dbReference type="Pharos" id="A6NCN2">
    <property type="development level" value="Tdark"/>
</dbReference>
<dbReference type="Proteomes" id="UP000005640">
    <property type="component" value="Unplaced"/>
</dbReference>
<dbReference type="RNAct" id="A6NCN2">
    <property type="molecule type" value="protein"/>
</dbReference>
<dbReference type="GO" id="GO:0005829">
    <property type="term" value="C:cytosol"/>
    <property type="evidence" value="ECO:0007669"/>
    <property type="project" value="UniProtKB-ARBA"/>
</dbReference>
<dbReference type="GO" id="GO:0005615">
    <property type="term" value="C:extracellular space"/>
    <property type="evidence" value="ECO:0007005"/>
    <property type="project" value="UniProtKB"/>
</dbReference>
<dbReference type="GO" id="GO:0045095">
    <property type="term" value="C:keratin filament"/>
    <property type="evidence" value="ECO:0007669"/>
    <property type="project" value="InterPro"/>
</dbReference>
<dbReference type="FunFam" id="1.20.5.1160:FF:000024">
    <property type="entry name" value="Putative keratin-87 protein"/>
    <property type="match status" value="1"/>
</dbReference>
<dbReference type="FunFam" id="1.20.5.500:FF:000001">
    <property type="entry name" value="Type II keratin 23"/>
    <property type="match status" value="1"/>
</dbReference>
<dbReference type="Gene3D" id="1.20.5.170">
    <property type="match status" value="1"/>
</dbReference>
<dbReference type="Gene3D" id="1.20.5.500">
    <property type="entry name" value="Single helix bin"/>
    <property type="match status" value="1"/>
</dbReference>
<dbReference type="Gene3D" id="1.20.5.1160">
    <property type="entry name" value="Vasodilator-stimulated phosphoprotein"/>
    <property type="match status" value="1"/>
</dbReference>
<dbReference type="InterPro" id="IPR039008">
    <property type="entry name" value="IF_rod_dom"/>
</dbReference>
<dbReference type="InterPro" id="IPR003054">
    <property type="entry name" value="Keratin_II"/>
</dbReference>
<dbReference type="PANTHER" id="PTHR45616">
    <property type="entry name" value="GATA-TYPE DOMAIN-CONTAINING PROTEIN"/>
    <property type="match status" value="1"/>
</dbReference>
<dbReference type="PANTHER" id="PTHR45616:SF52">
    <property type="entry name" value="KERATIN, TYPE II CUTICULAR HB3"/>
    <property type="match status" value="1"/>
</dbReference>
<dbReference type="Pfam" id="PF00038">
    <property type="entry name" value="Filament"/>
    <property type="match status" value="1"/>
</dbReference>
<dbReference type="PRINTS" id="PR01276">
    <property type="entry name" value="TYPE2KERATIN"/>
</dbReference>
<dbReference type="SMART" id="SM01391">
    <property type="entry name" value="Filament"/>
    <property type="match status" value="1"/>
</dbReference>
<dbReference type="SUPFAM" id="SSF64593">
    <property type="entry name" value="Intermediate filament protein, coiled coil region"/>
    <property type="match status" value="1"/>
</dbReference>
<dbReference type="SUPFAM" id="SSF46579">
    <property type="entry name" value="Prefoldin"/>
    <property type="match status" value="1"/>
</dbReference>
<dbReference type="PROSITE" id="PS51842">
    <property type="entry name" value="IF_ROD_2"/>
    <property type="match status" value="1"/>
</dbReference>
<evidence type="ECO:0000255" key="1"/>
<evidence type="ECO:0000255" key="2">
    <source>
        <dbReference type="PROSITE-ProRule" id="PRU01188"/>
    </source>
</evidence>
<evidence type="ECO:0000305" key="3"/>
<protein>
    <recommendedName>
        <fullName>Putative keratin-87 protein</fullName>
    </recommendedName>
    <alternativeName>
        <fullName>Keratin, hair, basic pseudogene 4</fullName>
    </alternativeName>
    <alternativeName>
        <fullName>Keratin-121 pseudogene</fullName>
    </alternativeName>
</protein>
<proteinExistence type="uncertain"/>
<comment type="subunit">
    <text>Heterotetramer of two type I and two type II keratins.</text>
</comment>
<comment type="miscellaneous">
    <text>There are two types of hair/microfibrillar keratin, I (acidic) and II (neutral to basic).</text>
</comment>
<comment type="similarity">
    <text evidence="2">Belongs to the intermediate filament family.</text>
</comment>
<comment type="caution">
    <text evidence="3">Could be the product of a pseudogene.</text>
</comment>
<gene>
    <name type="primary">KRT87P</name>
    <name type="synonym">KRT121P</name>
    <name type="synonym">KRTHBP4</name>
</gene>
<organism>
    <name type="scientific">Homo sapiens</name>
    <name type="common">Human</name>
    <dbReference type="NCBI Taxonomy" id="9606"/>
    <lineage>
        <taxon>Eukaryota</taxon>
        <taxon>Metazoa</taxon>
        <taxon>Chordata</taxon>
        <taxon>Craniata</taxon>
        <taxon>Vertebrata</taxon>
        <taxon>Euteleostomi</taxon>
        <taxon>Mammalia</taxon>
        <taxon>Eutheria</taxon>
        <taxon>Euarchontoglires</taxon>
        <taxon>Primates</taxon>
        <taxon>Haplorrhini</taxon>
        <taxon>Catarrhini</taxon>
        <taxon>Hominidae</taxon>
        <taxon>Homo</taxon>
    </lineage>
</organism>
<accession>A6NCN2</accession>
<accession>B4DTA1</accession>
<feature type="chain" id="PRO_0000340661" description="Putative keratin-87 protein">
    <location>
        <begin position="1"/>
        <end position="255"/>
    </location>
</feature>
<feature type="domain" description="IF rod" evidence="2">
    <location>
        <begin position="1"/>
        <end position="255"/>
    </location>
</feature>
<feature type="coiled-coil region" evidence="1">
    <location>
        <begin position="19"/>
        <end position="81"/>
    </location>
</feature>
<feature type="coiled-coil region" evidence="1">
    <location>
        <begin position="147"/>
        <end position="227"/>
    </location>
</feature>
<feature type="sequence conflict" description="In Ref. 1; BAG61913." evidence="3" ref="1">
    <original>N</original>
    <variation>D</variation>
    <location>
        <position position="4"/>
    </location>
</feature>